<feature type="chain" id="PRO_0000103960" description="Uncharacterized protein Rv2087">
    <location>
        <begin position="1"/>
        <end position="76"/>
    </location>
</feature>
<reference key="1">
    <citation type="journal article" date="1998" name="Nature">
        <title>Deciphering the biology of Mycobacterium tuberculosis from the complete genome sequence.</title>
        <authorList>
            <person name="Cole S.T."/>
            <person name="Brosch R."/>
            <person name="Parkhill J."/>
            <person name="Garnier T."/>
            <person name="Churcher C.M."/>
            <person name="Harris D.E."/>
            <person name="Gordon S.V."/>
            <person name="Eiglmeier K."/>
            <person name="Gas S."/>
            <person name="Barry C.E. III"/>
            <person name="Tekaia F."/>
            <person name="Badcock K."/>
            <person name="Basham D."/>
            <person name="Brown D."/>
            <person name="Chillingworth T."/>
            <person name="Connor R."/>
            <person name="Davies R.M."/>
            <person name="Devlin K."/>
            <person name="Feltwell T."/>
            <person name="Gentles S."/>
            <person name="Hamlin N."/>
            <person name="Holroyd S."/>
            <person name="Hornsby T."/>
            <person name="Jagels K."/>
            <person name="Krogh A."/>
            <person name="McLean J."/>
            <person name="Moule S."/>
            <person name="Murphy L.D."/>
            <person name="Oliver S."/>
            <person name="Osborne J."/>
            <person name="Quail M.A."/>
            <person name="Rajandream M.A."/>
            <person name="Rogers J."/>
            <person name="Rutter S."/>
            <person name="Seeger K."/>
            <person name="Skelton S."/>
            <person name="Squares S."/>
            <person name="Squares R."/>
            <person name="Sulston J.E."/>
            <person name="Taylor K."/>
            <person name="Whitehead S."/>
            <person name="Barrell B.G."/>
        </authorList>
    </citation>
    <scope>NUCLEOTIDE SEQUENCE [LARGE SCALE GENOMIC DNA]</scope>
    <source>
        <strain>ATCC 25618 / H37Rv</strain>
    </source>
</reference>
<protein>
    <recommendedName>
        <fullName>Uncharacterized protein Rv2087</fullName>
    </recommendedName>
</protein>
<accession>P9WLJ7</accession>
<accession>L0T8M2</accession>
<accession>Q10696</accession>
<dbReference type="EMBL" id="AL123456">
    <property type="protein sequence ID" value="CCP44862.1"/>
    <property type="molecule type" value="Genomic_DNA"/>
</dbReference>
<dbReference type="PIR" id="B70767">
    <property type="entry name" value="B70767"/>
</dbReference>
<dbReference type="STRING" id="83332.Rv2087"/>
<dbReference type="PaxDb" id="83332-Rv2087"/>
<dbReference type="KEGG" id="mtv:RVBD_2087"/>
<dbReference type="TubercuList" id="Rv2087"/>
<dbReference type="eggNOG" id="COG2801">
    <property type="taxonomic scope" value="Bacteria"/>
</dbReference>
<dbReference type="InParanoid" id="P9WLJ7"/>
<dbReference type="PhylomeDB" id="P9WLJ7"/>
<dbReference type="Proteomes" id="UP000001584">
    <property type="component" value="Chromosome"/>
</dbReference>
<proteinExistence type="predicted"/>
<organism>
    <name type="scientific">Mycobacterium tuberculosis (strain ATCC 25618 / H37Rv)</name>
    <dbReference type="NCBI Taxonomy" id="83332"/>
    <lineage>
        <taxon>Bacteria</taxon>
        <taxon>Bacillati</taxon>
        <taxon>Actinomycetota</taxon>
        <taxon>Actinomycetes</taxon>
        <taxon>Mycobacteriales</taxon>
        <taxon>Mycobacteriaceae</taxon>
        <taxon>Mycobacterium</taxon>
        <taxon>Mycobacterium tuberculosis complex</taxon>
    </lineage>
</organism>
<gene>
    <name type="ordered locus">Rv2087</name>
    <name type="ORF">MTCY49.27</name>
</gene>
<sequence length="76" mass="8088">MLAGLRPSIGIVGDALDNALCETTTGPHRTECSHGSPFRSGPIRTLADLEDIASAWVEHTCHTQQGVRIPGRLQPA</sequence>
<keyword id="KW-1185">Reference proteome</keyword>
<name>Y2087_MYCTU</name>